<dbReference type="EMBL" id="AL939124">
    <property type="protein sequence ID" value="CAA19925.1"/>
    <property type="molecule type" value="Genomic_DNA"/>
</dbReference>
<dbReference type="PIR" id="T35471">
    <property type="entry name" value="T35471"/>
</dbReference>
<dbReference type="RefSeq" id="NP_629761.1">
    <property type="nucleotide sequence ID" value="NC_003888.3"/>
</dbReference>
<dbReference type="RefSeq" id="WP_003973383.1">
    <property type="nucleotide sequence ID" value="NZ_VNID01000034.1"/>
</dbReference>
<dbReference type="SMR" id="O86770"/>
<dbReference type="FunCoup" id="O86770">
    <property type="interactions" value="288"/>
</dbReference>
<dbReference type="STRING" id="100226.gene:17763285"/>
<dbReference type="PaxDb" id="100226-SCO5627"/>
<dbReference type="GeneID" id="91383415"/>
<dbReference type="KEGG" id="sco:SCO5627"/>
<dbReference type="PATRIC" id="fig|100226.15.peg.5716"/>
<dbReference type="eggNOG" id="COG0233">
    <property type="taxonomic scope" value="Bacteria"/>
</dbReference>
<dbReference type="HOGENOM" id="CLU_073981_2_0_11"/>
<dbReference type="InParanoid" id="O86770"/>
<dbReference type="OrthoDB" id="9804006at2"/>
<dbReference type="PhylomeDB" id="O86770"/>
<dbReference type="Proteomes" id="UP000001973">
    <property type="component" value="Chromosome"/>
</dbReference>
<dbReference type="GO" id="GO:0005737">
    <property type="term" value="C:cytoplasm"/>
    <property type="evidence" value="ECO:0007669"/>
    <property type="project" value="UniProtKB-SubCell"/>
</dbReference>
<dbReference type="GO" id="GO:0043023">
    <property type="term" value="F:ribosomal large subunit binding"/>
    <property type="evidence" value="ECO:0000318"/>
    <property type="project" value="GO_Central"/>
</dbReference>
<dbReference type="GO" id="GO:0006412">
    <property type="term" value="P:translation"/>
    <property type="evidence" value="ECO:0000318"/>
    <property type="project" value="GO_Central"/>
</dbReference>
<dbReference type="GO" id="GO:0006415">
    <property type="term" value="P:translational termination"/>
    <property type="evidence" value="ECO:0007669"/>
    <property type="project" value="UniProtKB-UniRule"/>
</dbReference>
<dbReference type="CDD" id="cd00520">
    <property type="entry name" value="RRF"/>
    <property type="match status" value="1"/>
</dbReference>
<dbReference type="FunFam" id="1.10.132.20:FF:000001">
    <property type="entry name" value="Ribosome-recycling factor"/>
    <property type="match status" value="1"/>
</dbReference>
<dbReference type="FunFam" id="3.30.1360.40:FF:000001">
    <property type="entry name" value="Ribosome-recycling factor"/>
    <property type="match status" value="1"/>
</dbReference>
<dbReference type="Gene3D" id="3.30.1360.40">
    <property type="match status" value="1"/>
</dbReference>
<dbReference type="Gene3D" id="1.10.132.20">
    <property type="entry name" value="Ribosome-recycling factor"/>
    <property type="match status" value="1"/>
</dbReference>
<dbReference type="HAMAP" id="MF_00040">
    <property type="entry name" value="RRF"/>
    <property type="match status" value="1"/>
</dbReference>
<dbReference type="InterPro" id="IPR002661">
    <property type="entry name" value="Ribosome_recyc_fac"/>
</dbReference>
<dbReference type="InterPro" id="IPR023584">
    <property type="entry name" value="Ribosome_recyc_fac_dom"/>
</dbReference>
<dbReference type="InterPro" id="IPR036191">
    <property type="entry name" value="RRF_sf"/>
</dbReference>
<dbReference type="NCBIfam" id="TIGR00496">
    <property type="entry name" value="frr"/>
    <property type="match status" value="1"/>
</dbReference>
<dbReference type="PANTHER" id="PTHR20982:SF3">
    <property type="entry name" value="MITOCHONDRIAL RIBOSOME RECYCLING FACTOR PSEUDO 1"/>
    <property type="match status" value="1"/>
</dbReference>
<dbReference type="PANTHER" id="PTHR20982">
    <property type="entry name" value="RIBOSOME RECYCLING FACTOR"/>
    <property type="match status" value="1"/>
</dbReference>
<dbReference type="Pfam" id="PF01765">
    <property type="entry name" value="RRF"/>
    <property type="match status" value="1"/>
</dbReference>
<dbReference type="SUPFAM" id="SSF55194">
    <property type="entry name" value="Ribosome recycling factor, RRF"/>
    <property type="match status" value="1"/>
</dbReference>
<proteinExistence type="inferred from homology"/>
<reference key="1">
    <citation type="journal article" date="2002" name="Nature">
        <title>Complete genome sequence of the model actinomycete Streptomyces coelicolor A3(2).</title>
        <authorList>
            <person name="Bentley S.D."/>
            <person name="Chater K.F."/>
            <person name="Cerdeno-Tarraga A.-M."/>
            <person name="Challis G.L."/>
            <person name="Thomson N.R."/>
            <person name="James K.D."/>
            <person name="Harris D.E."/>
            <person name="Quail M.A."/>
            <person name="Kieser H."/>
            <person name="Harper D."/>
            <person name="Bateman A."/>
            <person name="Brown S."/>
            <person name="Chandra G."/>
            <person name="Chen C.W."/>
            <person name="Collins M."/>
            <person name="Cronin A."/>
            <person name="Fraser A."/>
            <person name="Goble A."/>
            <person name="Hidalgo J."/>
            <person name="Hornsby T."/>
            <person name="Howarth S."/>
            <person name="Huang C.-H."/>
            <person name="Kieser T."/>
            <person name="Larke L."/>
            <person name="Murphy L.D."/>
            <person name="Oliver K."/>
            <person name="O'Neil S."/>
            <person name="Rabbinowitsch E."/>
            <person name="Rajandream M.A."/>
            <person name="Rutherford K.M."/>
            <person name="Rutter S."/>
            <person name="Seeger K."/>
            <person name="Saunders D."/>
            <person name="Sharp S."/>
            <person name="Squares R."/>
            <person name="Squares S."/>
            <person name="Taylor K."/>
            <person name="Warren T."/>
            <person name="Wietzorrek A."/>
            <person name="Woodward J.R."/>
            <person name="Barrell B.G."/>
            <person name="Parkhill J."/>
            <person name="Hopwood D.A."/>
        </authorList>
    </citation>
    <scope>NUCLEOTIDE SEQUENCE [LARGE SCALE GENOMIC DNA]</scope>
    <source>
        <strain>ATCC BAA-471 / A3(2) / M145</strain>
    </source>
</reference>
<feature type="chain" id="PRO_0000167550" description="Ribosome-recycling factor">
    <location>
        <begin position="1"/>
        <end position="185"/>
    </location>
</feature>
<feature type="region of interest" description="Disordered" evidence="2">
    <location>
        <begin position="137"/>
        <end position="162"/>
    </location>
</feature>
<name>RRF_STRCO</name>
<keyword id="KW-0963">Cytoplasm</keyword>
<keyword id="KW-0648">Protein biosynthesis</keyword>
<keyword id="KW-1185">Reference proteome</keyword>
<comment type="function">
    <text evidence="1">Responsible for the release of ribosomes from messenger RNA at the termination of protein biosynthesis. May increase the efficiency of translation by recycling ribosomes from one round of translation to another.</text>
</comment>
<comment type="subcellular location">
    <subcellularLocation>
        <location evidence="1">Cytoplasm</location>
    </subcellularLocation>
</comment>
<comment type="similarity">
    <text evidence="1">Belongs to the RRF family.</text>
</comment>
<gene>
    <name evidence="1" type="primary">frr</name>
    <name type="ordered locus">SCO5627</name>
    <name type="ORF">SC6A9.40c</name>
</gene>
<sequence length="185" mass="20787">MIEETLLEAEEKMEKAVVVAKEDFAAIRTGRAHPAMFNKIVAEYYGAPTPINQLASFSVPEPRMAVVTPFDKTALRNIEQAIRDSDLGVNPSNDGNIIRVTFPELTEERRREYIKVAKAKGEDAKVSIRSVRRKAKDSIDKMVKDGEVGEDEGRRAEKELDDTTAKYVAQVDELLKHKEAELLEV</sequence>
<accession>O86770</accession>
<protein>
    <recommendedName>
        <fullName evidence="1">Ribosome-recycling factor</fullName>
        <shortName evidence="1">RRF</shortName>
    </recommendedName>
    <alternativeName>
        <fullName evidence="1">Ribosome-releasing factor</fullName>
    </alternativeName>
</protein>
<evidence type="ECO:0000255" key="1">
    <source>
        <dbReference type="HAMAP-Rule" id="MF_00040"/>
    </source>
</evidence>
<evidence type="ECO:0000256" key="2">
    <source>
        <dbReference type="SAM" id="MobiDB-lite"/>
    </source>
</evidence>
<organism>
    <name type="scientific">Streptomyces coelicolor (strain ATCC BAA-471 / A3(2) / M145)</name>
    <dbReference type="NCBI Taxonomy" id="100226"/>
    <lineage>
        <taxon>Bacteria</taxon>
        <taxon>Bacillati</taxon>
        <taxon>Actinomycetota</taxon>
        <taxon>Actinomycetes</taxon>
        <taxon>Kitasatosporales</taxon>
        <taxon>Streptomycetaceae</taxon>
        <taxon>Streptomyces</taxon>
        <taxon>Streptomyces albidoflavus group</taxon>
    </lineage>
</organism>